<name>SYI_STAA1</name>
<proteinExistence type="inferred from homology"/>
<sequence length="917" mass="104886">MDYKETLLMPKTDFPMRGGLPNKEPQIQEKWDAEDQYHKALEKNKGNETFILHDGPPYANGNLHMGHALNKILKDFIVRYKTMQGFYAPYVPGWDTHGLPIEQALTKKGVDRKKMSTAEFREKCKEFALEQIELQKKDFRRLGVRGDFNDPYITLKPEYEAAQIRIFGEMADKGLIYKGKKPVYWSPSSESSLAEAEIEYHDKRSASIYVAFDVKDDKGVVDADAKFIIWTTTPWTIPSNVAITVHPELKYGQYNVNGEKYIIAEALSDAVAEALDWDKASIKLEKEYTGKELEYVVAQHPFLDRESLVINGDHVTTDAGTGCVHTAPGHGEDDYIVGQKYELPVISPIDDKGVFTEEGGQFEGMFYDKANKAVTDLLTEKGALLKLDFITHSYPHDWRTKKPVIFRATPQWFASISKVRQDILDAIENTNFKVNWGKTRIYNMVRDRGEWVISRQRVWGVPLPVFYAENGEIIMTKETVNHVADLFAEHGSNIWFEREAKDLLPEGFTHPGSPNGTFTKETDIMDVWFDSGSSHRGVLETRPELSFPADMYLEGSDQYRGWFNSSITTSVATRGVSPYKFLLSHGFVMDGEGKKMSKSLGNVIVPDQVVKQKGADIARLWVSSTDYLADVRISDEILKQTSDVYRKIRNTLRFMLGNINDFNPDTDSIPESELLEVDRYLLNRLREFTASTINNYENFDYLNIYQEVQNFINVELSNFYLDYGKDILYIEQRDSHIRRSMQTVLYQILVDMTKLLAPILVHTAEEVWSHTPHVKEESVHLADMPKVVEVDQALLDKWRTFMNLRDDVNRALETARNEKVIGKSLEAKVTIASNDKFNASEFLTSFDALHQLFIVSQVKVVDKLDDQATAYEHGDIVIEHADGEKCERCWNYSEDLGAVDELTHLCPRCQQVVKSLV</sequence>
<dbReference type="EC" id="6.1.1.5" evidence="1"/>
<dbReference type="EMBL" id="AP009324">
    <property type="protein sequence ID" value="BAF78066.1"/>
    <property type="molecule type" value="Genomic_DNA"/>
</dbReference>
<dbReference type="RefSeq" id="WP_000384691.1">
    <property type="nucleotide sequence ID" value="NZ_CTYB01000010.1"/>
</dbReference>
<dbReference type="SMR" id="A7X1D8"/>
<dbReference type="KEGG" id="saw:SAHV_1183"/>
<dbReference type="HOGENOM" id="CLU_001493_7_1_9"/>
<dbReference type="GO" id="GO:0005829">
    <property type="term" value="C:cytosol"/>
    <property type="evidence" value="ECO:0007669"/>
    <property type="project" value="TreeGrafter"/>
</dbReference>
<dbReference type="GO" id="GO:0002161">
    <property type="term" value="F:aminoacyl-tRNA deacylase activity"/>
    <property type="evidence" value="ECO:0007669"/>
    <property type="project" value="InterPro"/>
</dbReference>
<dbReference type="GO" id="GO:0005524">
    <property type="term" value="F:ATP binding"/>
    <property type="evidence" value="ECO:0007669"/>
    <property type="project" value="UniProtKB-UniRule"/>
</dbReference>
<dbReference type="GO" id="GO:0004822">
    <property type="term" value="F:isoleucine-tRNA ligase activity"/>
    <property type="evidence" value="ECO:0007669"/>
    <property type="project" value="UniProtKB-UniRule"/>
</dbReference>
<dbReference type="GO" id="GO:0000049">
    <property type="term" value="F:tRNA binding"/>
    <property type="evidence" value="ECO:0007669"/>
    <property type="project" value="InterPro"/>
</dbReference>
<dbReference type="GO" id="GO:0008270">
    <property type="term" value="F:zinc ion binding"/>
    <property type="evidence" value="ECO:0007669"/>
    <property type="project" value="UniProtKB-UniRule"/>
</dbReference>
<dbReference type="GO" id="GO:0006428">
    <property type="term" value="P:isoleucyl-tRNA aminoacylation"/>
    <property type="evidence" value="ECO:0007669"/>
    <property type="project" value="UniProtKB-UniRule"/>
</dbReference>
<dbReference type="CDD" id="cd07960">
    <property type="entry name" value="Anticodon_Ia_Ile_BEm"/>
    <property type="match status" value="1"/>
</dbReference>
<dbReference type="CDD" id="cd00818">
    <property type="entry name" value="IleRS_core"/>
    <property type="match status" value="1"/>
</dbReference>
<dbReference type="FunFam" id="1.10.10.830:FF:000001">
    <property type="entry name" value="Isoleucine--tRNA ligase"/>
    <property type="match status" value="1"/>
</dbReference>
<dbReference type="FunFam" id="1.10.730.20:FF:000001">
    <property type="entry name" value="Isoleucine--tRNA ligase"/>
    <property type="match status" value="1"/>
</dbReference>
<dbReference type="FunFam" id="3.40.50.620:FF:000152">
    <property type="entry name" value="Isoleucine--tRNA ligase"/>
    <property type="match status" value="1"/>
</dbReference>
<dbReference type="FunFam" id="3.90.740.10:FF:000006">
    <property type="entry name" value="Isoleucine--tRNA ligase"/>
    <property type="match status" value="1"/>
</dbReference>
<dbReference type="Gene3D" id="1.10.730.20">
    <property type="match status" value="1"/>
</dbReference>
<dbReference type="Gene3D" id="3.40.50.620">
    <property type="entry name" value="HUPs"/>
    <property type="match status" value="2"/>
</dbReference>
<dbReference type="Gene3D" id="1.10.10.830">
    <property type="entry name" value="Ile-tRNA synthetase CP2 domain-like"/>
    <property type="match status" value="1"/>
</dbReference>
<dbReference type="HAMAP" id="MF_02002">
    <property type="entry name" value="Ile_tRNA_synth_type1"/>
    <property type="match status" value="1"/>
</dbReference>
<dbReference type="InterPro" id="IPR001412">
    <property type="entry name" value="aa-tRNA-synth_I_CS"/>
</dbReference>
<dbReference type="InterPro" id="IPR002300">
    <property type="entry name" value="aa-tRNA-synth_Ia"/>
</dbReference>
<dbReference type="InterPro" id="IPR033708">
    <property type="entry name" value="Anticodon_Ile_BEm"/>
</dbReference>
<dbReference type="InterPro" id="IPR002301">
    <property type="entry name" value="Ile-tRNA-ligase"/>
</dbReference>
<dbReference type="InterPro" id="IPR023585">
    <property type="entry name" value="Ile-tRNA-ligase_type1"/>
</dbReference>
<dbReference type="InterPro" id="IPR050081">
    <property type="entry name" value="Ile-tRNA_ligase"/>
</dbReference>
<dbReference type="InterPro" id="IPR013155">
    <property type="entry name" value="M/V/L/I-tRNA-synth_anticd-bd"/>
</dbReference>
<dbReference type="InterPro" id="IPR014729">
    <property type="entry name" value="Rossmann-like_a/b/a_fold"/>
</dbReference>
<dbReference type="InterPro" id="IPR009080">
    <property type="entry name" value="tRNAsynth_Ia_anticodon-bd"/>
</dbReference>
<dbReference type="InterPro" id="IPR009008">
    <property type="entry name" value="Val/Leu/Ile-tRNA-synth_edit"/>
</dbReference>
<dbReference type="InterPro" id="IPR010663">
    <property type="entry name" value="Znf_FPG/IleRS"/>
</dbReference>
<dbReference type="NCBIfam" id="TIGR00392">
    <property type="entry name" value="ileS"/>
    <property type="match status" value="1"/>
</dbReference>
<dbReference type="PANTHER" id="PTHR42765:SF1">
    <property type="entry name" value="ISOLEUCINE--TRNA LIGASE, MITOCHONDRIAL"/>
    <property type="match status" value="1"/>
</dbReference>
<dbReference type="PANTHER" id="PTHR42765">
    <property type="entry name" value="SOLEUCYL-TRNA SYNTHETASE"/>
    <property type="match status" value="1"/>
</dbReference>
<dbReference type="Pfam" id="PF08264">
    <property type="entry name" value="Anticodon_1"/>
    <property type="match status" value="1"/>
</dbReference>
<dbReference type="Pfam" id="PF00133">
    <property type="entry name" value="tRNA-synt_1"/>
    <property type="match status" value="1"/>
</dbReference>
<dbReference type="Pfam" id="PF06827">
    <property type="entry name" value="zf-FPG_IleRS"/>
    <property type="match status" value="1"/>
</dbReference>
<dbReference type="PRINTS" id="PR00984">
    <property type="entry name" value="TRNASYNTHILE"/>
</dbReference>
<dbReference type="SUPFAM" id="SSF47323">
    <property type="entry name" value="Anticodon-binding domain of a subclass of class I aminoacyl-tRNA synthetases"/>
    <property type="match status" value="1"/>
</dbReference>
<dbReference type="SUPFAM" id="SSF52374">
    <property type="entry name" value="Nucleotidylyl transferase"/>
    <property type="match status" value="1"/>
</dbReference>
<dbReference type="SUPFAM" id="SSF50677">
    <property type="entry name" value="ValRS/IleRS/LeuRS editing domain"/>
    <property type="match status" value="1"/>
</dbReference>
<dbReference type="PROSITE" id="PS00178">
    <property type="entry name" value="AA_TRNA_LIGASE_I"/>
    <property type="match status" value="1"/>
</dbReference>
<evidence type="ECO:0000255" key="1">
    <source>
        <dbReference type="HAMAP-Rule" id="MF_02002"/>
    </source>
</evidence>
<feature type="chain" id="PRO_1000022127" description="Isoleucine--tRNA ligase">
    <location>
        <begin position="1"/>
        <end position="917"/>
    </location>
</feature>
<feature type="short sequence motif" description="'HIGH' region">
    <location>
        <begin position="57"/>
        <end position="67"/>
    </location>
</feature>
<feature type="short sequence motif" description="'KMSKS' region">
    <location>
        <begin position="595"/>
        <end position="599"/>
    </location>
</feature>
<feature type="binding site" evidence="1">
    <location>
        <position position="554"/>
    </location>
    <ligand>
        <name>L-isoleucyl-5'-AMP</name>
        <dbReference type="ChEBI" id="CHEBI:178002"/>
    </ligand>
</feature>
<feature type="binding site" evidence="1">
    <location>
        <position position="598"/>
    </location>
    <ligand>
        <name>ATP</name>
        <dbReference type="ChEBI" id="CHEBI:30616"/>
    </ligand>
</feature>
<feature type="binding site" evidence="1">
    <location>
        <position position="886"/>
    </location>
    <ligand>
        <name>Zn(2+)</name>
        <dbReference type="ChEBI" id="CHEBI:29105"/>
    </ligand>
</feature>
<feature type="binding site" evidence="1">
    <location>
        <position position="889"/>
    </location>
    <ligand>
        <name>Zn(2+)</name>
        <dbReference type="ChEBI" id="CHEBI:29105"/>
    </ligand>
</feature>
<feature type="binding site" evidence="1">
    <location>
        <position position="906"/>
    </location>
    <ligand>
        <name>Zn(2+)</name>
        <dbReference type="ChEBI" id="CHEBI:29105"/>
    </ligand>
</feature>
<feature type="binding site" evidence="1">
    <location>
        <position position="909"/>
    </location>
    <ligand>
        <name>Zn(2+)</name>
        <dbReference type="ChEBI" id="CHEBI:29105"/>
    </ligand>
</feature>
<protein>
    <recommendedName>
        <fullName evidence="1">Isoleucine--tRNA ligase</fullName>
        <ecNumber evidence="1">6.1.1.5</ecNumber>
    </recommendedName>
    <alternativeName>
        <fullName evidence="1">Isoleucyl-tRNA synthetase</fullName>
        <shortName evidence="1">IleRS</shortName>
    </alternativeName>
</protein>
<reference key="1">
    <citation type="journal article" date="2008" name="Antimicrob. Agents Chemother.">
        <title>Mutated response regulator graR is responsible for phenotypic conversion of Staphylococcus aureus from heterogeneous vancomycin-intermediate resistance to vancomycin-intermediate resistance.</title>
        <authorList>
            <person name="Neoh H.-M."/>
            <person name="Cui L."/>
            <person name="Yuzawa H."/>
            <person name="Takeuchi F."/>
            <person name="Matsuo M."/>
            <person name="Hiramatsu K."/>
        </authorList>
    </citation>
    <scope>NUCLEOTIDE SEQUENCE [LARGE SCALE GENOMIC DNA]</scope>
    <source>
        <strain>Mu3 / ATCC 700698</strain>
    </source>
</reference>
<comment type="function">
    <text evidence="1">Catalyzes the attachment of isoleucine to tRNA(Ile). As IleRS can inadvertently accommodate and process structurally similar amino acids such as valine, to avoid such errors it has two additional distinct tRNA(Ile)-dependent editing activities. One activity is designated as 'pretransfer' editing and involves the hydrolysis of activated Val-AMP. The other activity is designated 'posttransfer' editing and involves deacylation of mischarged Val-tRNA(Ile).</text>
</comment>
<comment type="catalytic activity">
    <reaction evidence="1">
        <text>tRNA(Ile) + L-isoleucine + ATP = L-isoleucyl-tRNA(Ile) + AMP + diphosphate</text>
        <dbReference type="Rhea" id="RHEA:11060"/>
        <dbReference type="Rhea" id="RHEA-COMP:9666"/>
        <dbReference type="Rhea" id="RHEA-COMP:9695"/>
        <dbReference type="ChEBI" id="CHEBI:30616"/>
        <dbReference type="ChEBI" id="CHEBI:33019"/>
        <dbReference type="ChEBI" id="CHEBI:58045"/>
        <dbReference type="ChEBI" id="CHEBI:78442"/>
        <dbReference type="ChEBI" id="CHEBI:78528"/>
        <dbReference type="ChEBI" id="CHEBI:456215"/>
        <dbReference type="EC" id="6.1.1.5"/>
    </reaction>
</comment>
<comment type="cofactor">
    <cofactor evidence="1">
        <name>Zn(2+)</name>
        <dbReference type="ChEBI" id="CHEBI:29105"/>
    </cofactor>
    <text evidence="1">Binds 1 zinc ion per subunit.</text>
</comment>
<comment type="subunit">
    <text evidence="1">Monomer.</text>
</comment>
<comment type="subcellular location">
    <subcellularLocation>
        <location evidence="1">Cytoplasm</location>
    </subcellularLocation>
</comment>
<comment type="domain">
    <text evidence="1">IleRS has two distinct active sites: one for aminoacylation and one for editing. The misactivated valine is translocated from the active site to the editing site, which sterically excludes the correctly activated isoleucine. The single editing site contains two valyl binding pockets, one specific for each substrate (Val-AMP or Val-tRNA(Ile)).</text>
</comment>
<comment type="similarity">
    <text evidence="1">Belongs to the class-I aminoacyl-tRNA synthetase family. IleS type 1 subfamily.</text>
</comment>
<gene>
    <name evidence="1" type="primary">ileS</name>
    <name type="ordered locus">SAHV_1183</name>
</gene>
<organism>
    <name type="scientific">Staphylococcus aureus (strain Mu3 / ATCC 700698)</name>
    <dbReference type="NCBI Taxonomy" id="418127"/>
    <lineage>
        <taxon>Bacteria</taxon>
        <taxon>Bacillati</taxon>
        <taxon>Bacillota</taxon>
        <taxon>Bacilli</taxon>
        <taxon>Bacillales</taxon>
        <taxon>Staphylococcaceae</taxon>
        <taxon>Staphylococcus</taxon>
    </lineage>
</organism>
<keyword id="KW-0030">Aminoacyl-tRNA synthetase</keyword>
<keyword id="KW-0067">ATP-binding</keyword>
<keyword id="KW-0963">Cytoplasm</keyword>
<keyword id="KW-0436">Ligase</keyword>
<keyword id="KW-0479">Metal-binding</keyword>
<keyword id="KW-0547">Nucleotide-binding</keyword>
<keyword id="KW-0648">Protein biosynthesis</keyword>
<keyword id="KW-0862">Zinc</keyword>
<accession>A7X1D8</accession>